<keyword id="KW-1015">Disulfide bond</keyword>
<keyword id="KW-0325">Glycoprotein</keyword>
<keyword id="KW-0358">Heparin-binding</keyword>
<keyword id="KW-1185">Reference proteome</keyword>
<keyword id="KW-0677">Repeat</keyword>
<keyword id="KW-0964">Secreted</keyword>
<keyword id="KW-0716">Sensory transduction</keyword>
<keyword id="KW-0732">Signal</keyword>
<keyword id="KW-0879">Wnt signaling pathway</keyword>
<evidence type="ECO:0000250" key="1"/>
<evidence type="ECO:0000250" key="2">
    <source>
        <dbReference type="UniProtKB" id="Q2TJ95"/>
    </source>
</evidence>
<evidence type="ECO:0000250" key="3">
    <source>
        <dbReference type="UniProtKB" id="Q9BXY4"/>
    </source>
</evidence>
<evidence type="ECO:0000255" key="4"/>
<evidence type="ECO:0000255" key="5">
    <source>
        <dbReference type="PROSITE-ProRule" id="PRU00210"/>
    </source>
</evidence>
<evidence type="ECO:0000256" key="6">
    <source>
        <dbReference type="SAM" id="MobiDB-lite"/>
    </source>
</evidence>
<evidence type="ECO:0000305" key="7"/>
<sequence length="317" mass="35943">MQLQLISIVLILHFMEYTNCQHHGSRHRGNKQVSGVSSQGCQGGCQTCSVYNGCLTCKPKLFIHLERDGMRQIGVCLASCPNGFYGTRSPDRNDCIKCGSECDSCFNRNFCLRCRAGSYLHKGKCMESCPDGLVPSDTKKECVAACPALCDLCQNSDTCTRCVPGHFLHAGQCHHVCPDEFEPNDSMECIPTVHCEVSEWSEWGTCSRSGKTCGFKWGEETRTRKVLQNPSPMGSPCPPTSEKRECFVKKKRCKPPKGQRRGEKKKRFNLQEKVTAEARRERKREREKETIDREESENRNKTEQRRRRDQSRDAGTV</sequence>
<reference key="1">
    <citation type="submission" date="1999-12" db="EMBL/GenBank/DDBJ databases">
        <title>Nucleopondin, a novel nuclear protein with a thrombospondin type I repeat, is expressed in dynamic spatial and temporal patterns in zebrafish and mouse development.</title>
        <authorList>
            <person name="Mieda M."/>
            <person name="Hirate Y."/>
            <person name="Aoki M."/>
            <person name="Sasaki K."/>
            <person name="Okamoto H."/>
        </authorList>
    </citation>
    <scope>NUCLEOTIDE SEQUENCE [MRNA]</scope>
    <source>
        <tissue>Embryo</tissue>
    </source>
</reference>
<reference key="2">
    <citation type="submission" date="2007-04" db="EMBL/GenBank/DDBJ databases">
        <authorList>
            <consortium name="NIH - Zebrafish Gene Collection (ZGC) project"/>
        </authorList>
    </citation>
    <scope>NUCLEOTIDE SEQUENCE [LARGE SCALE MRNA]</scope>
    <source>
        <strain>WIK</strain>
    </source>
</reference>
<dbReference type="EMBL" id="AB035930">
    <property type="protein sequence ID" value="BAD74061.1"/>
    <property type="molecule type" value="mRNA"/>
</dbReference>
<dbReference type="EMBL" id="BC139514">
    <property type="protein sequence ID" value="AAI39515.1"/>
    <property type="molecule type" value="mRNA"/>
</dbReference>
<dbReference type="RefSeq" id="NP_001017358.1">
    <property type="nucleotide sequence ID" value="NM_001017358.1"/>
</dbReference>
<dbReference type="SMR" id="Q5R328"/>
<dbReference type="FunCoup" id="Q5R328">
    <property type="interactions" value="1419"/>
</dbReference>
<dbReference type="STRING" id="7955.ENSDARP00000058577"/>
<dbReference type="GlyCosmos" id="Q5R328">
    <property type="glycosylation" value="2 sites, No reported glycans"/>
</dbReference>
<dbReference type="PaxDb" id="7955-ENSDARP00000058577"/>
<dbReference type="GeneID" id="100007702"/>
<dbReference type="KEGG" id="dre:100007702"/>
<dbReference type="AGR" id="ZFIN:ZDB-GENE-030131-9814"/>
<dbReference type="CTD" id="84870"/>
<dbReference type="ZFIN" id="ZDB-GENE-030131-9814">
    <property type="gene designation" value="rspo3"/>
</dbReference>
<dbReference type="eggNOG" id="KOG3525">
    <property type="taxonomic scope" value="Eukaryota"/>
</dbReference>
<dbReference type="InParanoid" id="Q5R328"/>
<dbReference type="OrthoDB" id="10257656at2759"/>
<dbReference type="PhylomeDB" id="Q5R328"/>
<dbReference type="Reactome" id="R-DRE-4641263">
    <property type="pathway name" value="Regulation of FZD by ubiquitination"/>
</dbReference>
<dbReference type="PRO" id="PR:Q5R328"/>
<dbReference type="Proteomes" id="UP000000437">
    <property type="component" value="Chromosome 16"/>
</dbReference>
<dbReference type="GO" id="GO:0005615">
    <property type="term" value="C:extracellular space"/>
    <property type="evidence" value="ECO:0000318"/>
    <property type="project" value="GO_Central"/>
</dbReference>
<dbReference type="GO" id="GO:0005109">
    <property type="term" value="F:frizzled binding"/>
    <property type="evidence" value="ECO:0000318"/>
    <property type="project" value="GO_Central"/>
</dbReference>
<dbReference type="GO" id="GO:0008201">
    <property type="term" value="F:heparin binding"/>
    <property type="evidence" value="ECO:0007669"/>
    <property type="project" value="UniProtKB-KW"/>
</dbReference>
<dbReference type="GO" id="GO:0060612">
    <property type="term" value="P:adipose tissue development"/>
    <property type="evidence" value="ECO:0000315"/>
    <property type="project" value="ZFIN"/>
</dbReference>
<dbReference type="GO" id="GO:0001974">
    <property type="term" value="P:blood vessel remodeling"/>
    <property type="evidence" value="ECO:0000250"/>
    <property type="project" value="UniProtKB"/>
</dbReference>
<dbReference type="GO" id="GO:1904888">
    <property type="term" value="P:cranial skeletal system development"/>
    <property type="evidence" value="ECO:0000315"/>
    <property type="project" value="ZFIN"/>
</dbReference>
<dbReference type="GO" id="GO:0030178">
    <property type="term" value="P:negative regulation of Wnt signaling pathway"/>
    <property type="evidence" value="ECO:0000315"/>
    <property type="project" value="ZFIN"/>
</dbReference>
<dbReference type="GO" id="GO:0090263">
    <property type="term" value="P:positive regulation of canonical Wnt signaling pathway"/>
    <property type="evidence" value="ECO:0000318"/>
    <property type="project" value="GO_Central"/>
</dbReference>
<dbReference type="GO" id="GO:2000052">
    <property type="term" value="P:positive regulation of non-canonical Wnt signaling pathway"/>
    <property type="evidence" value="ECO:0000250"/>
    <property type="project" value="UniProtKB"/>
</dbReference>
<dbReference type="GO" id="GO:0048919">
    <property type="term" value="P:posterior lateral line neuromast development"/>
    <property type="evidence" value="ECO:0000315"/>
    <property type="project" value="ZFIN"/>
</dbReference>
<dbReference type="GO" id="GO:0042481">
    <property type="term" value="P:regulation of odontogenesis"/>
    <property type="evidence" value="ECO:0000315"/>
    <property type="project" value="ZFIN"/>
</dbReference>
<dbReference type="GO" id="GO:0002040">
    <property type="term" value="P:sprouting angiogenesis"/>
    <property type="evidence" value="ECO:0000250"/>
    <property type="project" value="UniProtKB"/>
</dbReference>
<dbReference type="GO" id="GO:0016055">
    <property type="term" value="P:Wnt signaling pathway"/>
    <property type="evidence" value="ECO:0007669"/>
    <property type="project" value="UniProtKB-KW"/>
</dbReference>
<dbReference type="CDD" id="cd00064">
    <property type="entry name" value="FU"/>
    <property type="match status" value="1"/>
</dbReference>
<dbReference type="Gene3D" id="2.10.220.10">
    <property type="entry name" value="Hormone Receptor, Insulin-like Growth Factor Receptor 1, Chain A, domain 2"/>
    <property type="match status" value="2"/>
</dbReference>
<dbReference type="Gene3D" id="2.20.100.10">
    <property type="entry name" value="Thrombospondin type-1 (TSP1) repeat"/>
    <property type="match status" value="1"/>
</dbReference>
<dbReference type="InterPro" id="IPR006212">
    <property type="entry name" value="Furin_repeat"/>
</dbReference>
<dbReference type="InterPro" id="IPR009030">
    <property type="entry name" value="Growth_fac_rcpt_cys_sf"/>
</dbReference>
<dbReference type="InterPro" id="IPR051514">
    <property type="entry name" value="R-spondin"/>
</dbReference>
<dbReference type="InterPro" id="IPR043601">
    <property type="entry name" value="Rspo_Fu-CRD_dom"/>
</dbReference>
<dbReference type="InterPro" id="IPR000884">
    <property type="entry name" value="TSP1_rpt"/>
</dbReference>
<dbReference type="InterPro" id="IPR036383">
    <property type="entry name" value="TSP1_rpt_sf"/>
</dbReference>
<dbReference type="InterPro" id="IPR044004">
    <property type="entry name" value="TSP1_spondin_dom"/>
</dbReference>
<dbReference type="PANTHER" id="PTHR46987">
    <property type="entry name" value="NEUROHYPOPHYSIAL HORMONES, N-TERMINAL DOMAIN CONTAINING PROTEIN"/>
    <property type="match status" value="1"/>
</dbReference>
<dbReference type="PANTHER" id="PTHR46987:SF1">
    <property type="entry name" value="R-SPONDIN-3"/>
    <property type="match status" value="1"/>
</dbReference>
<dbReference type="Pfam" id="PF15913">
    <property type="entry name" value="Furin-like_2"/>
    <property type="match status" value="1"/>
</dbReference>
<dbReference type="Pfam" id="PF19028">
    <property type="entry name" value="TSP1_spondin"/>
    <property type="match status" value="1"/>
</dbReference>
<dbReference type="SMART" id="SM00261">
    <property type="entry name" value="FU"/>
    <property type="match status" value="3"/>
</dbReference>
<dbReference type="SMART" id="SM00209">
    <property type="entry name" value="TSP1"/>
    <property type="match status" value="1"/>
</dbReference>
<dbReference type="SUPFAM" id="SSF57184">
    <property type="entry name" value="Growth factor receptor domain"/>
    <property type="match status" value="1"/>
</dbReference>
<dbReference type="SUPFAM" id="SSF82895">
    <property type="entry name" value="TSP-1 type 1 repeat"/>
    <property type="match status" value="1"/>
</dbReference>
<dbReference type="PROSITE" id="PS50092">
    <property type="entry name" value="TSP1"/>
    <property type="match status" value="1"/>
</dbReference>
<feature type="signal peptide" evidence="4">
    <location>
        <begin position="1"/>
        <end position="20"/>
    </location>
</feature>
<feature type="chain" id="PRO_0000234445" description="R-spondin-3">
    <location>
        <begin position="21"/>
        <end position="317"/>
    </location>
</feature>
<feature type="repeat" description="FU 1">
    <location>
        <begin position="34"/>
        <end position="86"/>
    </location>
</feature>
<feature type="repeat" description="FU 2">
    <location>
        <begin position="92"/>
        <end position="135"/>
    </location>
</feature>
<feature type="repeat" description="FU 3">
    <location>
        <begin position="139"/>
        <end position="183"/>
    </location>
</feature>
<feature type="domain" description="TSP type-1" evidence="5">
    <location>
        <begin position="194"/>
        <end position="254"/>
    </location>
</feature>
<feature type="region of interest" description="Disordered" evidence="6">
    <location>
        <begin position="251"/>
        <end position="317"/>
    </location>
</feature>
<feature type="compositionally biased region" description="Basic residues" evidence="6">
    <location>
        <begin position="251"/>
        <end position="268"/>
    </location>
</feature>
<feature type="compositionally biased region" description="Basic and acidic residues" evidence="6">
    <location>
        <begin position="274"/>
        <end position="303"/>
    </location>
</feature>
<feature type="glycosylation site" description="N-linked (GlcNAc...) asparagine" evidence="4">
    <location>
        <position position="184"/>
    </location>
</feature>
<feature type="glycosylation site" description="N-linked (GlcNAc...) asparagine" evidence="4">
    <location>
        <position position="300"/>
    </location>
</feature>
<feature type="disulfide bond" evidence="5">
    <location>
        <begin position="41"/>
        <end position="48"/>
    </location>
</feature>
<feature type="disulfide bond" evidence="5">
    <location>
        <begin position="45"/>
        <end position="54"/>
    </location>
</feature>
<feature type="disulfide bond" evidence="5">
    <location>
        <begin position="57"/>
        <end position="76"/>
    </location>
</feature>
<feature type="disulfide bond" evidence="5">
    <location>
        <begin position="80"/>
        <end position="95"/>
    </location>
</feature>
<feature type="disulfide bond" evidence="5">
    <location>
        <begin position="98"/>
        <end position="105"/>
    </location>
</feature>
<feature type="disulfide bond" evidence="5">
    <location>
        <begin position="102"/>
        <end position="111"/>
    </location>
</feature>
<feature type="disulfide bond" evidence="5">
    <location>
        <begin position="114"/>
        <end position="125"/>
    </location>
</feature>
<feature type="disulfide bond" evidence="5">
    <location>
        <begin position="129"/>
        <end position="189"/>
    </location>
</feature>
<feature type="disulfide bond" evidence="5">
    <location>
        <begin position="195"/>
        <end position="237"/>
    </location>
</feature>
<feature type="disulfide bond" evidence="5">
    <location>
        <begin position="206"/>
        <end position="213"/>
    </location>
</feature>
<feature type="disulfide bond" evidence="5">
    <location>
        <begin position="246"/>
        <end position="253"/>
    </location>
</feature>
<feature type="sequence conflict" description="In Ref. 1; BAD74061." evidence="7" ref="1">
    <original>N</original>
    <variation>S</variation>
    <location>
        <position position="298"/>
    </location>
</feature>
<comment type="function">
    <text evidence="2 3">Activator of the canonical Wnt signaling pathway by acting as a ligand for lgr4-6 receptors, which acts as a key regulator of angiogenesis. Upon binding to lgr4-6 (lgr4, lgr5 or lgr6), lgr4-6 associate with phosphorylated lrp6 and frizzled receptors that are activated by extracellular Wnt receptors, triggering the canonical Wnt signaling pathway to increase expression of target genes. Acts both in the canonical. Wnt/beta-catenin-dependent pathway and in non-canonical Wnt signaling pathway. Acts as a key regulator of angiogenesis by controlling vascular stability and pruning: acts by activating the non-canonical Wnt signaling pathway in endothelial cells (By similarity). Can also amplify Wnt signaling pathway independently of LGR4-6 receptors, possibly by acting as a direct antagonistic ligand to RNF43 and ZNRF3 (By similarity).</text>
</comment>
<comment type="subunit">
    <text evidence="1">Binds heparin.</text>
</comment>
<comment type="subcellular location">
    <subcellularLocation>
        <location evidence="2">Secreted</location>
    </subcellularLocation>
</comment>
<comment type="domain">
    <text evidence="2">The FU repeats are required for activation and stabilization of beta-catenin.</text>
</comment>
<comment type="similarity">
    <text evidence="7">Belongs to the R-spondin family.</text>
</comment>
<accession>Q5R328</accession>
<accession>A4QNT6</accession>
<protein>
    <recommendedName>
        <fullName>R-spondin-3</fullName>
    </recommendedName>
    <alternativeName>
        <fullName>Cabriolet</fullName>
    </alternativeName>
    <alternativeName>
        <fullName>Roof plate-specific spondin-3</fullName>
    </alternativeName>
</protein>
<gene>
    <name type="primary">rspo3</name>
    <name type="ORF">sb:cb387</name>
    <name type="ORF">zgc:162040</name>
</gene>
<name>RSPO3_DANRE</name>
<organism>
    <name type="scientific">Danio rerio</name>
    <name type="common">Zebrafish</name>
    <name type="synonym">Brachydanio rerio</name>
    <dbReference type="NCBI Taxonomy" id="7955"/>
    <lineage>
        <taxon>Eukaryota</taxon>
        <taxon>Metazoa</taxon>
        <taxon>Chordata</taxon>
        <taxon>Craniata</taxon>
        <taxon>Vertebrata</taxon>
        <taxon>Euteleostomi</taxon>
        <taxon>Actinopterygii</taxon>
        <taxon>Neopterygii</taxon>
        <taxon>Teleostei</taxon>
        <taxon>Ostariophysi</taxon>
        <taxon>Cypriniformes</taxon>
        <taxon>Danionidae</taxon>
        <taxon>Danioninae</taxon>
        <taxon>Danio</taxon>
    </lineage>
</organism>
<proteinExistence type="evidence at transcript level"/>